<sequence>MGLMNAFDSQTEDSSPAIGRNLRSRPLARKKLSEMVEEELEQMIRRREFGEGEQLPSERELMAFFNVGRPSVREALAALKRKGLVQINNGERARVSRPSADTIIGELSGMAKDFLSHPGGIAHFEQLRLFFESSLVRYAAEHATDEQIDLLAKALEINSQSLDNNAAFIRSDVDFHRVLAEIPGNPIFMAIHVALLDWLIAARPTVTDQALHEHNNVSYQQHIAIVDAIRRHDPDEADRALQSHLNSVSATWHAFGQTTNKKK</sequence>
<dbReference type="EMBL" id="U18997">
    <property type="protein sequence ID" value="AAA58028.1"/>
    <property type="molecule type" value="Genomic_DNA"/>
</dbReference>
<dbReference type="EMBL" id="U00096">
    <property type="protein sequence ID" value="AAC76258.1"/>
    <property type="molecule type" value="Genomic_DNA"/>
</dbReference>
<dbReference type="EMBL" id="AP009048">
    <property type="protein sequence ID" value="BAE77269.1"/>
    <property type="molecule type" value="Genomic_DNA"/>
</dbReference>
<dbReference type="PIR" id="D65114">
    <property type="entry name" value="D65114"/>
</dbReference>
<dbReference type="RefSeq" id="NP_417693.3">
    <property type="nucleotide sequence ID" value="NC_000913.3"/>
</dbReference>
<dbReference type="RefSeq" id="WP_000523845.1">
    <property type="nucleotide sequence ID" value="NZ_STEB01000012.1"/>
</dbReference>
<dbReference type="PDB" id="6ON4">
    <property type="method" value="X-ray"/>
    <property type="resolution" value="2.10 A"/>
    <property type="chains" value="A/B=1-263"/>
</dbReference>
<dbReference type="PDB" id="6WFQ">
    <property type="method" value="EM"/>
    <property type="resolution" value="3.90 A"/>
    <property type="chains" value="C/D=1-263"/>
</dbReference>
<dbReference type="PDB" id="6WG7">
    <property type="method" value="EM"/>
    <property type="resolution" value="8.30 A"/>
    <property type="chains" value="C/D/E/F/G/H=1-263"/>
</dbReference>
<dbReference type="PDBsum" id="6ON4"/>
<dbReference type="PDBsum" id="6WFQ"/>
<dbReference type="PDBsum" id="6WG7"/>
<dbReference type="SASBDB" id="P0A8W0"/>
<dbReference type="SMR" id="P0A8W0"/>
<dbReference type="BioGRID" id="4262443">
    <property type="interactions" value="118"/>
</dbReference>
<dbReference type="DIP" id="DIP-12284N"/>
<dbReference type="FunCoup" id="P0A8W0">
    <property type="interactions" value="43"/>
</dbReference>
<dbReference type="IntAct" id="P0A8W0">
    <property type="interactions" value="1"/>
</dbReference>
<dbReference type="STRING" id="511145.b3226"/>
<dbReference type="jPOST" id="P0A8W0"/>
<dbReference type="PaxDb" id="511145-b3226"/>
<dbReference type="EnsemblBacteria" id="AAC76258">
    <property type="protein sequence ID" value="AAC76258"/>
    <property type="gene ID" value="b3226"/>
</dbReference>
<dbReference type="GeneID" id="75206076"/>
<dbReference type="GeneID" id="945468"/>
<dbReference type="KEGG" id="ecj:JW3195"/>
<dbReference type="KEGG" id="eco:b3226"/>
<dbReference type="KEGG" id="ecoc:C3026_17550"/>
<dbReference type="PATRIC" id="fig|1411691.4.peg.3502"/>
<dbReference type="EchoBASE" id="EB2668"/>
<dbReference type="eggNOG" id="COG2186">
    <property type="taxonomic scope" value="Bacteria"/>
</dbReference>
<dbReference type="HOGENOM" id="CLU_017584_9_1_6"/>
<dbReference type="InParanoid" id="P0A8W0"/>
<dbReference type="OMA" id="QMVSNPI"/>
<dbReference type="OrthoDB" id="7005926at2"/>
<dbReference type="PhylomeDB" id="P0A8W0"/>
<dbReference type="BioCyc" id="EcoCyc:G7678-MONOMER"/>
<dbReference type="PRO" id="PR:P0A8W0"/>
<dbReference type="Proteomes" id="UP000000625">
    <property type="component" value="Chromosome"/>
</dbReference>
<dbReference type="GO" id="GO:0001046">
    <property type="term" value="F:core promoter sequence-specific DNA binding"/>
    <property type="evidence" value="ECO:0000314"/>
    <property type="project" value="EcoCyc"/>
</dbReference>
<dbReference type="GO" id="GO:0003677">
    <property type="term" value="F:DNA binding"/>
    <property type="evidence" value="ECO:0000314"/>
    <property type="project" value="EcoCyc"/>
</dbReference>
<dbReference type="GO" id="GO:0001217">
    <property type="term" value="F:DNA-binding transcription repressor activity"/>
    <property type="evidence" value="ECO:0000315"/>
    <property type="project" value="EcoCyc"/>
</dbReference>
<dbReference type="GO" id="GO:0042803">
    <property type="term" value="F:protein homodimerization activity"/>
    <property type="evidence" value="ECO:0000314"/>
    <property type="project" value="EcoCyc"/>
</dbReference>
<dbReference type="GO" id="GO:0006351">
    <property type="term" value="P:DNA-templated transcription"/>
    <property type="evidence" value="ECO:0000314"/>
    <property type="project" value="EcoCyc"/>
</dbReference>
<dbReference type="GO" id="GO:2000143">
    <property type="term" value="P:negative regulation of DNA-templated transcription initiation"/>
    <property type="evidence" value="ECO:0000315"/>
    <property type="project" value="EcoCyc"/>
</dbReference>
<dbReference type="GO" id="GO:0031334">
    <property type="term" value="P:positive regulation of protein-containing complex assembly"/>
    <property type="evidence" value="ECO:0000269"/>
    <property type="project" value="DisProt"/>
</dbReference>
<dbReference type="GO" id="GO:0006355">
    <property type="term" value="P:regulation of DNA-templated transcription"/>
    <property type="evidence" value="ECO:0000269"/>
    <property type="project" value="EcoCyc"/>
</dbReference>
<dbReference type="CDD" id="cd07377">
    <property type="entry name" value="WHTH_GntR"/>
    <property type="match status" value="1"/>
</dbReference>
<dbReference type="FunFam" id="1.10.10.10:FF:000150">
    <property type="entry name" value="HTH-type transcriptional repressor NanR"/>
    <property type="match status" value="1"/>
</dbReference>
<dbReference type="FunFam" id="1.20.120.530:FF:000006">
    <property type="entry name" value="HTH-type transcriptional repressor NanR"/>
    <property type="match status" value="1"/>
</dbReference>
<dbReference type="Gene3D" id="1.20.120.530">
    <property type="entry name" value="GntR ligand-binding domain-like"/>
    <property type="match status" value="1"/>
</dbReference>
<dbReference type="Gene3D" id="1.10.10.10">
    <property type="entry name" value="Winged helix-like DNA-binding domain superfamily/Winged helix DNA-binding domain"/>
    <property type="match status" value="1"/>
</dbReference>
<dbReference type="HAMAP" id="MF_01236">
    <property type="entry name" value="HTH_NanR"/>
    <property type="match status" value="1"/>
</dbReference>
<dbReference type="InterPro" id="IPR011711">
    <property type="entry name" value="GntR_C"/>
</dbReference>
<dbReference type="InterPro" id="IPR008920">
    <property type="entry name" value="TF_FadR/GntR_C"/>
</dbReference>
<dbReference type="InterPro" id="IPR000524">
    <property type="entry name" value="Tscrpt_reg_HTH_GntR"/>
</dbReference>
<dbReference type="InterPro" id="IPR023730">
    <property type="entry name" value="Tscrpt_reg_NanR"/>
</dbReference>
<dbReference type="InterPro" id="IPR036388">
    <property type="entry name" value="WH-like_DNA-bd_sf"/>
</dbReference>
<dbReference type="InterPro" id="IPR036390">
    <property type="entry name" value="WH_DNA-bd_sf"/>
</dbReference>
<dbReference type="NCBIfam" id="NF003011">
    <property type="entry name" value="PRK03837.1"/>
    <property type="match status" value="1"/>
</dbReference>
<dbReference type="PANTHER" id="PTHR43537:SF53">
    <property type="entry name" value="HTH-TYPE TRANSCRIPTIONAL REPRESSOR NANR"/>
    <property type="match status" value="1"/>
</dbReference>
<dbReference type="PANTHER" id="PTHR43537">
    <property type="entry name" value="TRANSCRIPTIONAL REGULATOR, GNTR FAMILY"/>
    <property type="match status" value="1"/>
</dbReference>
<dbReference type="Pfam" id="PF07729">
    <property type="entry name" value="FCD"/>
    <property type="match status" value="1"/>
</dbReference>
<dbReference type="Pfam" id="PF00392">
    <property type="entry name" value="GntR"/>
    <property type="match status" value="1"/>
</dbReference>
<dbReference type="PRINTS" id="PR00035">
    <property type="entry name" value="HTHGNTR"/>
</dbReference>
<dbReference type="SMART" id="SM00895">
    <property type="entry name" value="FCD"/>
    <property type="match status" value="1"/>
</dbReference>
<dbReference type="SMART" id="SM00345">
    <property type="entry name" value="HTH_GNTR"/>
    <property type="match status" value="1"/>
</dbReference>
<dbReference type="SUPFAM" id="SSF48008">
    <property type="entry name" value="GntR ligand-binding domain-like"/>
    <property type="match status" value="1"/>
</dbReference>
<dbReference type="SUPFAM" id="SSF46785">
    <property type="entry name" value="Winged helix' DNA-binding domain"/>
    <property type="match status" value="1"/>
</dbReference>
<dbReference type="PROSITE" id="PS50949">
    <property type="entry name" value="HTH_GNTR"/>
    <property type="match status" value="1"/>
</dbReference>
<comment type="function">
    <text evidence="3 4 5">Transcriptional repressor that controls expression of the genes required for the catabolism of sialic acids (PubMed:12897000, PubMed:23935044, PubMed:9864311). Represses expression of the nanATEK-yhcH, nanCMS and yjhBC operons. Acts by binding directly to the Nan box, a region of approximately 30 bp covering the promoter region (PubMed:23935044).</text>
</comment>
<comment type="activity regulation">
    <text evidence="4">N-acetylneuraminic acid (Neu5Ac) inactivates NanR by converting NanR oligomers to monomers.</text>
</comment>
<comment type="subunit">
    <text evidence="3 4">Homodimer (PubMed:12897000, PubMed:23935044). Might also form higher-order oligomers (PubMed:23935044).</text>
</comment>
<comment type="similarity">
    <text evidence="1 7">Belongs to the NanR family.</text>
</comment>
<accession>P0A8W0</accession>
<accession>P45427</accession>
<accession>Q2M8Y7</accession>
<evidence type="ECO:0000255" key="1">
    <source>
        <dbReference type="HAMAP-Rule" id="MF_01236"/>
    </source>
</evidence>
<evidence type="ECO:0000256" key="2">
    <source>
        <dbReference type="SAM" id="MobiDB-lite"/>
    </source>
</evidence>
<evidence type="ECO:0000269" key="3">
    <source>
    </source>
</evidence>
<evidence type="ECO:0000269" key="4">
    <source>
    </source>
</evidence>
<evidence type="ECO:0000269" key="5">
    <source>
    </source>
</evidence>
<evidence type="ECO:0000303" key="6">
    <source>
    </source>
</evidence>
<evidence type="ECO:0000305" key="7"/>
<evidence type="ECO:0007829" key="8">
    <source>
        <dbReference type="PDB" id="6ON4"/>
    </source>
</evidence>
<reference key="1">
    <citation type="journal article" date="1997" name="Science">
        <title>The complete genome sequence of Escherichia coli K-12.</title>
        <authorList>
            <person name="Blattner F.R."/>
            <person name="Plunkett G. III"/>
            <person name="Bloch C.A."/>
            <person name="Perna N.T."/>
            <person name="Burland V."/>
            <person name="Riley M."/>
            <person name="Collado-Vides J."/>
            <person name="Glasner J.D."/>
            <person name="Rode C.K."/>
            <person name="Mayhew G.F."/>
            <person name="Gregor J."/>
            <person name="Davis N.W."/>
            <person name="Kirkpatrick H.A."/>
            <person name="Goeden M.A."/>
            <person name="Rose D.J."/>
            <person name="Mau B."/>
            <person name="Shao Y."/>
        </authorList>
    </citation>
    <scope>NUCLEOTIDE SEQUENCE [LARGE SCALE GENOMIC DNA]</scope>
    <source>
        <strain>K12 / MG1655 / ATCC 47076</strain>
    </source>
</reference>
<reference key="2">
    <citation type="journal article" date="2006" name="Mol. Syst. Biol.">
        <title>Highly accurate genome sequences of Escherichia coli K-12 strains MG1655 and W3110.</title>
        <authorList>
            <person name="Hayashi K."/>
            <person name="Morooka N."/>
            <person name="Yamamoto Y."/>
            <person name="Fujita K."/>
            <person name="Isono K."/>
            <person name="Choi S."/>
            <person name="Ohtsubo E."/>
            <person name="Baba T."/>
            <person name="Wanner B.L."/>
            <person name="Mori H."/>
            <person name="Horiuchi T."/>
        </authorList>
    </citation>
    <scope>NUCLEOTIDE SEQUENCE [LARGE SCALE GENOMIC DNA]</scope>
    <source>
        <strain>K12 / W3110 / ATCC 27325 / DSM 5911</strain>
    </source>
</reference>
<reference key="3">
    <citation type="journal article" date="1999" name="J. Bacteriol.">
        <title>Convergent pathways for utilization of the amino sugars N-acetylglucosamine, N-acetylmannosamine, and N-acetylneuraminic acid by Escherichia coli.</title>
        <authorList>
            <person name="Plumbridge J."/>
            <person name="Vimr E."/>
        </authorList>
    </citation>
    <scope>FUNCTION</scope>
</reference>
<reference key="4">
    <citation type="journal article" date="2003" name="J. Bacteriol.">
        <title>Regulation of sialic acid catabolism by the DNA binding protein NanR in Escherichia coli.</title>
        <authorList>
            <person name="Kalivoda K.A."/>
            <person name="Steenbergen S.M."/>
            <person name="Vimr E.R."/>
            <person name="Plumbridge J."/>
        </authorList>
    </citation>
    <scope>FUNCTION</scope>
    <scope>DNA-BINDING</scope>
    <scope>SUBUNIT</scope>
</reference>
<reference key="5">
    <citation type="journal article" date="2013" name="J. Bacteriol.">
        <title>Control of the Escherichia coli sialoregulon by transcriptional repressor NanR.</title>
        <authorList>
            <person name="Kalivoda K.A."/>
            <person name="Steenbergen S.M."/>
            <person name="Vimr E.R."/>
        </authorList>
    </citation>
    <scope>FUNCTION</scope>
    <scope>DNA-BINDING</scope>
    <scope>ACTIVITY REGULATION</scope>
    <scope>SUBUNIT</scope>
</reference>
<proteinExistence type="evidence at protein level"/>
<gene>
    <name evidence="1 6" type="primary">nanR</name>
    <name type="synonym">yhcK</name>
    <name type="ordered locus">b3226</name>
    <name type="ordered locus">JW3195</name>
</gene>
<organism>
    <name type="scientific">Escherichia coli (strain K12)</name>
    <dbReference type="NCBI Taxonomy" id="83333"/>
    <lineage>
        <taxon>Bacteria</taxon>
        <taxon>Pseudomonadati</taxon>
        <taxon>Pseudomonadota</taxon>
        <taxon>Gammaproteobacteria</taxon>
        <taxon>Enterobacterales</taxon>
        <taxon>Enterobacteriaceae</taxon>
        <taxon>Escherichia</taxon>
    </lineage>
</organism>
<protein>
    <recommendedName>
        <fullName evidence="1 7">HTH-type transcriptional repressor NanR</fullName>
    </recommendedName>
</protein>
<keyword id="KW-0002">3D-structure</keyword>
<keyword id="KW-0238">DNA-binding</keyword>
<keyword id="KW-1185">Reference proteome</keyword>
<keyword id="KW-0678">Repressor</keyword>
<keyword id="KW-0804">Transcription</keyword>
<keyword id="KW-0805">Transcription regulation</keyword>
<name>NANR_ECOLI</name>
<feature type="chain" id="PRO_0000050655" description="HTH-type transcriptional repressor NanR">
    <location>
        <begin position="1"/>
        <end position="263"/>
    </location>
</feature>
<feature type="domain" description="HTH gntR-type" evidence="1">
    <location>
        <begin position="30"/>
        <end position="98"/>
    </location>
</feature>
<feature type="DNA-binding region" description="H-T-H motif" evidence="1">
    <location>
        <begin position="58"/>
        <end position="77"/>
    </location>
</feature>
<feature type="region of interest" description="Disordered" evidence="2">
    <location>
        <begin position="1"/>
        <end position="22"/>
    </location>
</feature>
<feature type="helix" evidence="8">
    <location>
        <begin position="32"/>
        <end position="45"/>
    </location>
</feature>
<feature type="strand" evidence="8">
    <location>
        <begin position="51"/>
        <end position="54"/>
    </location>
</feature>
<feature type="helix" evidence="8">
    <location>
        <begin position="58"/>
        <end position="65"/>
    </location>
</feature>
<feature type="helix" evidence="8">
    <location>
        <begin position="69"/>
        <end position="81"/>
    </location>
</feature>
<feature type="strand" evidence="8">
    <location>
        <begin position="84"/>
        <end position="86"/>
    </location>
</feature>
<feature type="helix" evidence="8">
    <location>
        <begin position="100"/>
        <end position="115"/>
    </location>
</feature>
<feature type="turn" evidence="8">
    <location>
        <begin position="118"/>
        <end position="120"/>
    </location>
</feature>
<feature type="helix" evidence="8">
    <location>
        <begin position="121"/>
        <end position="142"/>
    </location>
</feature>
<feature type="helix" evidence="8">
    <location>
        <begin position="145"/>
        <end position="159"/>
    </location>
</feature>
<feature type="turn" evidence="8">
    <location>
        <begin position="160"/>
        <end position="163"/>
    </location>
</feature>
<feature type="helix" evidence="8">
    <location>
        <begin position="165"/>
        <end position="181"/>
    </location>
</feature>
<feature type="helix" evidence="8">
    <location>
        <begin position="186"/>
        <end position="202"/>
    </location>
</feature>
<feature type="helix" evidence="8">
    <location>
        <begin position="208"/>
        <end position="230"/>
    </location>
</feature>
<feature type="helix" evidence="8">
    <location>
        <begin position="234"/>
        <end position="245"/>
    </location>
</feature>